<name>GLPK_MYCGE</name>
<feature type="chain" id="PRO_0000059467" description="Glycerol kinase">
    <location>
        <begin position="1"/>
        <end position="508"/>
    </location>
</feature>
<feature type="binding site" evidence="1">
    <location>
        <position position="15"/>
    </location>
    <ligand>
        <name>ADP</name>
        <dbReference type="ChEBI" id="CHEBI:456216"/>
    </ligand>
</feature>
<feature type="binding site" evidence="1">
    <location>
        <position position="15"/>
    </location>
    <ligand>
        <name>ATP</name>
        <dbReference type="ChEBI" id="CHEBI:30616"/>
    </ligand>
</feature>
<feature type="binding site" evidence="1">
    <location>
        <position position="15"/>
    </location>
    <ligand>
        <name>sn-glycerol 3-phosphate</name>
        <dbReference type="ChEBI" id="CHEBI:57597"/>
    </ligand>
</feature>
<feature type="binding site" evidence="1">
    <location>
        <position position="16"/>
    </location>
    <ligand>
        <name>ATP</name>
        <dbReference type="ChEBI" id="CHEBI:30616"/>
    </ligand>
</feature>
<feature type="binding site" evidence="1">
    <location>
        <position position="17"/>
    </location>
    <ligand>
        <name>ATP</name>
        <dbReference type="ChEBI" id="CHEBI:30616"/>
    </ligand>
</feature>
<feature type="binding site" evidence="1">
    <location>
        <position position="19"/>
    </location>
    <ligand>
        <name>ADP</name>
        <dbReference type="ChEBI" id="CHEBI:456216"/>
    </ligand>
</feature>
<feature type="binding site" evidence="1">
    <location>
        <position position="85"/>
    </location>
    <ligand>
        <name>glycerol</name>
        <dbReference type="ChEBI" id="CHEBI:17754"/>
    </ligand>
</feature>
<feature type="binding site" evidence="1">
    <location>
        <position position="85"/>
    </location>
    <ligand>
        <name>sn-glycerol 3-phosphate</name>
        <dbReference type="ChEBI" id="CHEBI:57597"/>
    </ligand>
</feature>
<feature type="binding site" evidence="1">
    <location>
        <position position="86"/>
    </location>
    <ligand>
        <name>glycerol</name>
        <dbReference type="ChEBI" id="CHEBI:17754"/>
    </ligand>
</feature>
<feature type="binding site" evidence="1">
    <location>
        <position position="86"/>
    </location>
    <ligand>
        <name>sn-glycerol 3-phosphate</name>
        <dbReference type="ChEBI" id="CHEBI:57597"/>
    </ligand>
</feature>
<feature type="binding site" evidence="1">
    <location>
        <position position="138"/>
    </location>
    <ligand>
        <name>glycerol</name>
        <dbReference type="ChEBI" id="CHEBI:17754"/>
    </ligand>
</feature>
<feature type="binding site" evidence="1">
    <location>
        <position position="138"/>
    </location>
    <ligand>
        <name>sn-glycerol 3-phosphate</name>
        <dbReference type="ChEBI" id="CHEBI:57597"/>
    </ligand>
</feature>
<feature type="binding site" evidence="1">
    <location>
        <position position="251"/>
    </location>
    <ligand>
        <name>glycerol</name>
        <dbReference type="ChEBI" id="CHEBI:17754"/>
    </ligand>
</feature>
<feature type="binding site" evidence="1">
    <location>
        <position position="251"/>
    </location>
    <ligand>
        <name>sn-glycerol 3-phosphate</name>
        <dbReference type="ChEBI" id="CHEBI:57597"/>
    </ligand>
</feature>
<feature type="binding site" evidence="1">
    <location>
        <position position="252"/>
    </location>
    <ligand>
        <name>glycerol</name>
        <dbReference type="ChEBI" id="CHEBI:17754"/>
    </ligand>
</feature>
<feature type="binding site" evidence="1">
    <location>
        <position position="273"/>
    </location>
    <ligand>
        <name>ADP</name>
        <dbReference type="ChEBI" id="CHEBI:456216"/>
    </ligand>
</feature>
<feature type="binding site" evidence="1">
    <location>
        <position position="273"/>
    </location>
    <ligand>
        <name>ATP</name>
        <dbReference type="ChEBI" id="CHEBI:30616"/>
    </ligand>
</feature>
<feature type="binding site" evidence="1">
    <location>
        <position position="317"/>
    </location>
    <ligand>
        <name>ADP</name>
        <dbReference type="ChEBI" id="CHEBI:456216"/>
    </ligand>
</feature>
<feature type="binding site" evidence="1">
    <location>
        <position position="317"/>
    </location>
    <ligand>
        <name>ATP</name>
        <dbReference type="ChEBI" id="CHEBI:30616"/>
    </ligand>
</feature>
<feature type="binding site" evidence="1">
    <location>
        <position position="419"/>
    </location>
    <ligand>
        <name>ADP</name>
        <dbReference type="ChEBI" id="CHEBI:456216"/>
    </ligand>
</feature>
<feature type="binding site" evidence="1">
    <location>
        <position position="419"/>
    </location>
    <ligand>
        <name>ATP</name>
        <dbReference type="ChEBI" id="CHEBI:30616"/>
    </ligand>
</feature>
<sequence>MDLKKQYIIALDEGTSSCRSIVFDHNLNQIAIAQNEFNTFFPNSGWVEQDPLEIWSAQLATMQSAKNKAQIKSHEVIAVGITNQRETIVLWNKENGLPVYNAIVWQDQRTAALCQKFNEDKLIQTKVKQKTGLPINPYFSATKIAWILKNVPLAKKLMEQKKLLFGTIDSWLIWKLTNGKMHVTDVSNASRTLLFDIVKMEWSKELCDLFEVPVSILPKVLSSNAYFGDIETNHWSSNAKGIVPIRAVLGDQQAALFGQLCTEPGMVKNTYGTGCFVLMNIGDKPTLSKHNLLTTVAWQLENHPPVYALEGSVFVAGAAIKWLRDALKIIYSEKESDFYAELAKENEQNLVFVPAFSGLGAPWWDASARGIILGIEASTKREHIVKASLESIAFQTNDLLNAMASDLGYKITSIKADGGIVKSNYLMQFQADIADVIVSIPKNKETTAVGVCFLAGLACGFWKDIHQLEKLTTLDKKFKSTMDPNIRKTKINSWHKAVERALKWKEID</sequence>
<dbReference type="EC" id="2.7.1.30" evidence="1"/>
<dbReference type="EMBL" id="L43967">
    <property type="protein sequence ID" value="AAC71254.1"/>
    <property type="molecule type" value="Genomic_DNA"/>
</dbReference>
<dbReference type="PIR" id="B64204">
    <property type="entry name" value="B64204"/>
</dbReference>
<dbReference type="RefSeq" id="WP_010869300.1">
    <property type="nucleotide sequence ID" value="NC_000908.2"/>
</dbReference>
<dbReference type="SMR" id="P47284"/>
<dbReference type="FunCoup" id="P47284">
    <property type="interactions" value="141"/>
</dbReference>
<dbReference type="STRING" id="243273.MG_038"/>
<dbReference type="GeneID" id="88282153"/>
<dbReference type="KEGG" id="mge:MG_038"/>
<dbReference type="eggNOG" id="COG0554">
    <property type="taxonomic scope" value="Bacteria"/>
</dbReference>
<dbReference type="HOGENOM" id="CLU_009281_2_3_14"/>
<dbReference type="InParanoid" id="P47284"/>
<dbReference type="OrthoDB" id="9805576at2"/>
<dbReference type="BioCyc" id="MGEN243273:G1GJ2-38-MONOMER"/>
<dbReference type="UniPathway" id="UPA00618">
    <property type="reaction ID" value="UER00672"/>
</dbReference>
<dbReference type="Proteomes" id="UP000000807">
    <property type="component" value="Chromosome"/>
</dbReference>
<dbReference type="GO" id="GO:0005829">
    <property type="term" value="C:cytosol"/>
    <property type="evidence" value="ECO:0000318"/>
    <property type="project" value="GO_Central"/>
</dbReference>
<dbReference type="GO" id="GO:0005524">
    <property type="term" value="F:ATP binding"/>
    <property type="evidence" value="ECO:0007669"/>
    <property type="project" value="UniProtKB-UniRule"/>
</dbReference>
<dbReference type="GO" id="GO:0004370">
    <property type="term" value="F:glycerol kinase activity"/>
    <property type="evidence" value="ECO:0000250"/>
    <property type="project" value="UniProtKB"/>
</dbReference>
<dbReference type="GO" id="GO:0019563">
    <property type="term" value="P:glycerol catabolic process"/>
    <property type="evidence" value="ECO:0000318"/>
    <property type="project" value="GO_Central"/>
</dbReference>
<dbReference type="GO" id="GO:0006071">
    <property type="term" value="P:glycerol metabolic process"/>
    <property type="evidence" value="ECO:0000250"/>
    <property type="project" value="UniProtKB"/>
</dbReference>
<dbReference type="GO" id="GO:0006072">
    <property type="term" value="P:glycerol-3-phosphate metabolic process"/>
    <property type="evidence" value="ECO:0007669"/>
    <property type="project" value="InterPro"/>
</dbReference>
<dbReference type="CDD" id="cd07786">
    <property type="entry name" value="FGGY_EcGK_like"/>
    <property type="match status" value="1"/>
</dbReference>
<dbReference type="FunFam" id="3.30.420.40:FF:000007">
    <property type="entry name" value="Glycerol kinase"/>
    <property type="match status" value="1"/>
</dbReference>
<dbReference type="FunFam" id="3.30.420.40:FF:000008">
    <property type="entry name" value="Glycerol kinase"/>
    <property type="match status" value="1"/>
</dbReference>
<dbReference type="Gene3D" id="3.30.420.40">
    <property type="match status" value="2"/>
</dbReference>
<dbReference type="HAMAP" id="MF_00186">
    <property type="entry name" value="Glycerol_kin"/>
    <property type="match status" value="1"/>
</dbReference>
<dbReference type="InterPro" id="IPR043129">
    <property type="entry name" value="ATPase_NBD"/>
</dbReference>
<dbReference type="InterPro" id="IPR000577">
    <property type="entry name" value="Carb_kinase_FGGY"/>
</dbReference>
<dbReference type="InterPro" id="IPR018483">
    <property type="entry name" value="Carb_kinase_FGGY_CS"/>
</dbReference>
<dbReference type="InterPro" id="IPR018485">
    <property type="entry name" value="FGGY_C"/>
</dbReference>
<dbReference type="InterPro" id="IPR018484">
    <property type="entry name" value="FGGY_N"/>
</dbReference>
<dbReference type="InterPro" id="IPR005999">
    <property type="entry name" value="Glycerol_kin"/>
</dbReference>
<dbReference type="NCBIfam" id="TIGR01311">
    <property type="entry name" value="glycerol_kin"/>
    <property type="match status" value="1"/>
</dbReference>
<dbReference type="NCBIfam" id="NF000756">
    <property type="entry name" value="PRK00047.1"/>
    <property type="match status" value="1"/>
</dbReference>
<dbReference type="PANTHER" id="PTHR10196:SF69">
    <property type="entry name" value="GLYCEROL KINASE"/>
    <property type="match status" value="1"/>
</dbReference>
<dbReference type="PANTHER" id="PTHR10196">
    <property type="entry name" value="SUGAR KINASE"/>
    <property type="match status" value="1"/>
</dbReference>
<dbReference type="Pfam" id="PF02782">
    <property type="entry name" value="FGGY_C"/>
    <property type="match status" value="1"/>
</dbReference>
<dbReference type="Pfam" id="PF00370">
    <property type="entry name" value="FGGY_N"/>
    <property type="match status" value="1"/>
</dbReference>
<dbReference type="PIRSF" id="PIRSF000538">
    <property type="entry name" value="GlpK"/>
    <property type="match status" value="1"/>
</dbReference>
<dbReference type="SUPFAM" id="SSF53067">
    <property type="entry name" value="Actin-like ATPase domain"/>
    <property type="match status" value="2"/>
</dbReference>
<dbReference type="PROSITE" id="PS00933">
    <property type="entry name" value="FGGY_KINASES_1"/>
    <property type="match status" value="1"/>
</dbReference>
<dbReference type="PROSITE" id="PS00445">
    <property type="entry name" value="FGGY_KINASES_2"/>
    <property type="match status" value="1"/>
</dbReference>
<comment type="function">
    <text evidence="1">Key enzyme in the regulation of glycerol uptake and metabolism. Catalyzes the phosphorylation of glycerol to yield sn-glycerol 3-phosphate.</text>
</comment>
<comment type="catalytic activity">
    <reaction evidence="1">
        <text>glycerol + ATP = sn-glycerol 3-phosphate + ADP + H(+)</text>
        <dbReference type="Rhea" id="RHEA:21644"/>
        <dbReference type="ChEBI" id="CHEBI:15378"/>
        <dbReference type="ChEBI" id="CHEBI:17754"/>
        <dbReference type="ChEBI" id="CHEBI:30616"/>
        <dbReference type="ChEBI" id="CHEBI:57597"/>
        <dbReference type="ChEBI" id="CHEBI:456216"/>
        <dbReference type="EC" id="2.7.1.30"/>
    </reaction>
</comment>
<comment type="activity regulation">
    <text evidence="1">Inhibited by fructose 1,6-bisphosphate (FBP).</text>
</comment>
<comment type="pathway">
    <text evidence="1">Polyol metabolism; glycerol degradation via glycerol kinase pathway; sn-glycerol 3-phosphate from glycerol: step 1/1.</text>
</comment>
<comment type="similarity">
    <text evidence="1">Belongs to the FGGY kinase family.</text>
</comment>
<organism>
    <name type="scientific">Mycoplasma genitalium (strain ATCC 33530 / DSM 19775 / NCTC 10195 / G37)</name>
    <name type="common">Mycoplasmoides genitalium</name>
    <dbReference type="NCBI Taxonomy" id="243273"/>
    <lineage>
        <taxon>Bacteria</taxon>
        <taxon>Bacillati</taxon>
        <taxon>Mycoplasmatota</taxon>
        <taxon>Mycoplasmoidales</taxon>
        <taxon>Mycoplasmoidaceae</taxon>
        <taxon>Mycoplasmoides</taxon>
    </lineage>
</organism>
<gene>
    <name evidence="1" type="primary">glpK</name>
    <name type="ordered locus">MG038</name>
</gene>
<accession>P47284</accession>
<reference key="1">
    <citation type="journal article" date="1995" name="Science">
        <title>The minimal gene complement of Mycoplasma genitalium.</title>
        <authorList>
            <person name="Fraser C.M."/>
            <person name="Gocayne J.D."/>
            <person name="White O."/>
            <person name="Adams M.D."/>
            <person name="Clayton R.A."/>
            <person name="Fleischmann R.D."/>
            <person name="Bult C.J."/>
            <person name="Kerlavage A.R."/>
            <person name="Sutton G.G."/>
            <person name="Kelley J.M."/>
            <person name="Fritchman J.L."/>
            <person name="Weidman J.F."/>
            <person name="Small K.V."/>
            <person name="Sandusky M."/>
            <person name="Fuhrmann J.L."/>
            <person name="Nguyen D.T."/>
            <person name="Utterback T.R."/>
            <person name="Saudek D.M."/>
            <person name="Phillips C.A."/>
            <person name="Merrick J.M."/>
            <person name="Tomb J.-F."/>
            <person name="Dougherty B.A."/>
            <person name="Bott K.F."/>
            <person name="Hu P.-C."/>
            <person name="Lucier T.S."/>
            <person name="Peterson S.N."/>
            <person name="Smith H.O."/>
            <person name="Hutchison C.A. III"/>
            <person name="Venter J.C."/>
        </authorList>
    </citation>
    <scope>NUCLEOTIDE SEQUENCE [LARGE SCALE GENOMIC DNA]</scope>
    <source>
        <strain>ATCC 33530 / DSM 19775 / NCTC 10195 / G37</strain>
    </source>
</reference>
<proteinExistence type="inferred from homology"/>
<keyword id="KW-0067">ATP-binding</keyword>
<keyword id="KW-0319">Glycerol metabolism</keyword>
<keyword id="KW-0418">Kinase</keyword>
<keyword id="KW-0547">Nucleotide-binding</keyword>
<keyword id="KW-1185">Reference proteome</keyword>
<keyword id="KW-0808">Transferase</keyword>
<evidence type="ECO:0000255" key="1">
    <source>
        <dbReference type="HAMAP-Rule" id="MF_00186"/>
    </source>
</evidence>
<protein>
    <recommendedName>
        <fullName evidence="1">Glycerol kinase</fullName>
        <ecNumber evidence="1">2.7.1.30</ecNumber>
    </recommendedName>
    <alternativeName>
        <fullName evidence="1">ATP:glycerol 3-phosphotransferase</fullName>
    </alternativeName>
    <alternativeName>
        <fullName evidence="1">Glycerokinase</fullName>
        <shortName evidence="1">GK</shortName>
    </alternativeName>
</protein>